<proteinExistence type="inferred from homology"/>
<keyword id="KW-0028">Amino-acid biosynthesis</keyword>
<keyword id="KW-0057">Aromatic amino acid biosynthesis</keyword>
<keyword id="KW-0456">Lyase</keyword>
<keyword id="KW-1185">Reference proteome</keyword>
<keyword id="KW-0822">Tryptophan biosynthesis</keyword>
<protein>
    <recommendedName>
        <fullName evidence="1">Tryptophan synthase alpha chain</fullName>
        <ecNumber evidence="1">4.2.1.20</ecNumber>
    </recommendedName>
</protein>
<comment type="function">
    <text evidence="1">The alpha subunit is responsible for the aldol cleavage of indoleglycerol phosphate to indole and glyceraldehyde 3-phosphate.</text>
</comment>
<comment type="catalytic activity">
    <reaction evidence="1">
        <text>(1S,2R)-1-C-(indol-3-yl)glycerol 3-phosphate + L-serine = D-glyceraldehyde 3-phosphate + L-tryptophan + H2O</text>
        <dbReference type="Rhea" id="RHEA:10532"/>
        <dbReference type="ChEBI" id="CHEBI:15377"/>
        <dbReference type="ChEBI" id="CHEBI:33384"/>
        <dbReference type="ChEBI" id="CHEBI:57912"/>
        <dbReference type="ChEBI" id="CHEBI:58866"/>
        <dbReference type="ChEBI" id="CHEBI:59776"/>
        <dbReference type="EC" id="4.2.1.20"/>
    </reaction>
</comment>
<comment type="pathway">
    <text evidence="1">Amino-acid biosynthesis; L-tryptophan biosynthesis; L-tryptophan from chorismate: step 5/5.</text>
</comment>
<comment type="subunit">
    <text evidence="1">Tetramer of two alpha and two beta chains.</text>
</comment>
<comment type="similarity">
    <text evidence="1">Belongs to the TrpA family.</text>
</comment>
<accession>B9DP27</accession>
<feature type="chain" id="PRO_1000198724" description="Tryptophan synthase alpha chain">
    <location>
        <begin position="1"/>
        <end position="250"/>
    </location>
</feature>
<feature type="active site" description="Proton acceptor" evidence="1">
    <location>
        <position position="31"/>
    </location>
</feature>
<feature type="active site" description="Proton acceptor" evidence="1">
    <location>
        <position position="42"/>
    </location>
</feature>
<evidence type="ECO:0000255" key="1">
    <source>
        <dbReference type="HAMAP-Rule" id="MF_00131"/>
    </source>
</evidence>
<name>TRPA_STACT</name>
<gene>
    <name evidence="1" type="primary">trpA</name>
    <name type="ordered locus">Sca_1018</name>
</gene>
<dbReference type="EC" id="4.2.1.20" evidence="1"/>
<dbReference type="EMBL" id="AM295250">
    <property type="protein sequence ID" value="CAL27926.1"/>
    <property type="molecule type" value="Genomic_DNA"/>
</dbReference>
<dbReference type="RefSeq" id="WP_015900267.1">
    <property type="nucleotide sequence ID" value="NC_012121.1"/>
</dbReference>
<dbReference type="SMR" id="B9DP27"/>
<dbReference type="GeneID" id="93793443"/>
<dbReference type="KEGG" id="sca:SCA_1018"/>
<dbReference type="eggNOG" id="COG0159">
    <property type="taxonomic scope" value="Bacteria"/>
</dbReference>
<dbReference type="HOGENOM" id="CLU_016734_0_0_9"/>
<dbReference type="OrthoDB" id="9804578at2"/>
<dbReference type="BioCyc" id="SCAR396513:SCA_RS05105-MONOMER"/>
<dbReference type="UniPathway" id="UPA00035">
    <property type="reaction ID" value="UER00044"/>
</dbReference>
<dbReference type="Proteomes" id="UP000000444">
    <property type="component" value="Chromosome"/>
</dbReference>
<dbReference type="GO" id="GO:0005829">
    <property type="term" value="C:cytosol"/>
    <property type="evidence" value="ECO:0007669"/>
    <property type="project" value="TreeGrafter"/>
</dbReference>
<dbReference type="GO" id="GO:0004834">
    <property type="term" value="F:tryptophan synthase activity"/>
    <property type="evidence" value="ECO:0007669"/>
    <property type="project" value="UniProtKB-UniRule"/>
</dbReference>
<dbReference type="CDD" id="cd04724">
    <property type="entry name" value="Tryptophan_synthase_alpha"/>
    <property type="match status" value="1"/>
</dbReference>
<dbReference type="Gene3D" id="3.20.20.70">
    <property type="entry name" value="Aldolase class I"/>
    <property type="match status" value="1"/>
</dbReference>
<dbReference type="HAMAP" id="MF_00131">
    <property type="entry name" value="Trp_synth_alpha"/>
    <property type="match status" value="1"/>
</dbReference>
<dbReference type="InterPro" id="IPR013785">
    <property type="entry name" value="Aldolase_TIM"/>
</dbReference>
<dbReference type="InterPro" id="IPR011060">
    <property type="entry name" value="RibuloseP-bd_barrel"/>
</dbReference>
<dbReference type="InterPro" id="IPR018204">
    <property type="entry name" value="Trp_synthase_alpha_AS"/>
</dbReference>
<dbReference type="InterPro" id="IPR002028">
    <property type="entry name" value="Trp_synthase_suA"/>
</dbReference>
<dbReference type="NCBIfam" id="TIGR00262">
    <property type="entry name" value="trpA"/>
    <property type="match status" value="1"/>
</dbReference>
<dbReference type="PANTHER" id="PTHR43406:SF1">
    <property type="entry name" value="TRYPTOPHAN SYNTHASE ALPHA CHAIN, CHLOROPLASTIC"/>
    <property type="match status" value="1"/>
</dbReference>
<dbReference type="PANTHER" id="PTHR43406">
    <property type="entry name" value="TRYPTOPHAN SYNTHASE, ALPHA CHAIN"/>
    <property type="match status" value="1"/>
</dbReference>
<dbReference type="Pfam" id="PF00290">
    <property type="entry name" value="Trp_syntA"/>
    <property type="match status" value="1"/>
</dbReference>
<dbReference type="SUPFAM" id="SSF51366">
    <property type="entry name" value="Ribulose-phoshate binding barrel"/>
    <property type="match status" value="1"/>
</dbReference>
<dbReference type="PROSITE" id="PS00167">
    <property type="entry name" value="TRP_SYNTHASE_ALPHA"/>
    <property type="match status" value="1"/>
</dbReference>
<sequence length="250" mass="27818">MSKLFIPYIMGNKDFISNLKVLSDEGADIVEIGLPFSDPVADGPTIMEAGNKAIEEGMNARKILQELKAHKDELKDTKYVLMTYYNIILHYGEEQFIKDCEAAGVYGLIIPDLPFELGEQLKERFKDSSVKIISLIAMTASDDRIQKIAQHADGFIYTVTMNATTGENGQFHPELQSKIEYIQKNADVPVVAGFGIRNPEQVSTLSEFTDGIVIGSEIVKRFANDSETSIRQYLQSIRRALDETKAAANS</sequence>
<organism>
    <name type="scientific">Staphylococcus carnosus (strain TM300)</name>
    <dbReference type="NCBI Taxonomy" id="396513"/>
    <lineage>
        <taxon>Bacteria</taxon>
        <taxon>Bacillati</taxon>
        <taxon>Bacillota</taxon>
        <taxon>Bacilli</taxon>
        <taxon>Bacillales</taxon>
        <taxon>Staphylococcaceae</taxon>
        <taxon>Staphylococcus</taxon>
    </lineage>
</organism>
<reference key="1">
    <citation type="journal article" date="2009" name="Appl. Environ. Microbiol.">
        <title>Genome analysis of the meat starter culture bacterium Staphylococcus carnosus TM300.</title>
        <authorList>
            <person name="Rosenstein R."/>
            <person name="Nerz C."/>
            <person name="Biswas L."/>
            <person name="Resch A."/>
            <person name="Raddatz G."/>
            <person name="Schuster S.C."/>
            <person name="Goetz F."/>
        </authorList>
    </citation>
    <scope>NUCLEOTIDE SEQUENCE [LARGE SCALE GENOMIC DNA]</scope>
    <source>
        <strain>TM300</strain>
    </source>
</reference>